<protein>
    <recommendedName>
        <fullName evidence="1">Met repressor</fullName>
    </recommendedName>
    <alternativeName>
        <fullName evidence="1">Met regulon regulatory protein MetJ</fullName>
    </alternativeName>
</protein>
<proteinExistence type="inferred from homology"/>
<organism>
    <name type="scientific">Vibrio vulnificus (strain CMCP6)</name>
    <dbReference type="NCBI Taxonomy" id="216895"/>
    <lineage>
        <taxon>Bacteria</taxon>
        <taxon>Pseudomonadati</taxon>
        <taxon>Pseudomonadota</taxon>
        <taxon>Gammaproteobacteria</taxon>
        <taxon>Vibrionales</taxon>
        <taxon>Vibrionaceae</taxon>
        <taxon>Vibrio</taxon>
    </lineage>
</organism>
<accession>Q8DCN7</accession>
<name>METJ_VIBVU</name>
<dbReference type="EMBL" id="AE016795">
    <property type="protein sequence ID" value="AAO09813.1"/>
    <property type="molecule type" value="Genomic_DNA"/>
</dbReference>
<dbReference type="RefSeq" id="WP_011079338.1">
    <property type="nucleotide sequence ID" value="NC_004459.3"/>
</dbReference>
<dbReference type="SMR" id="Q8DCN7"/>
<dbReference type="GeneID" id="93895627"/>
<dbReference type="KEGG" id="vvu:VV1_1362"/>
<dbReference type="HOGENOM" id="CLU_142318_0_0_6"/>
<dbReference type="Proteomes" id="UP000002275">
    <property type="component" value="Chromosome 1"/>
</dbReference>
<dbReference type="GO" id="GO:0005737">
    <property type="term" value="C:cytoplasm"/>
    <property type="evidence" value="ECO:0007669"/>
    <property type="project" value="UniProtKB-SubCell"/>
</dbReference>
<dbReference type="GO" id="GO:0003677">
    <property type="term" value="F:DNA binding"/>
    <property type="evidence" value="ECO:0007669"/>
    <property type="project" value="UniProtKB-KW"/>
</dbReference>
<dbReference type="GO" id="GO:0003700">
    <property type="term" value="F:DNA-binding transcription factor activity"/>
    <property type="evidence" value="ECO:0007669"/>
    <property type="project" value="InterPro"/>
</dbReference>
<dbReference type="GO" id="GO:0009086">
    <property type="term" value="P:methionine biosynthetic process"/>
    <property type="evidence" value="ECO:0007669"/>
    <property type="project" value="UniProtKB-UniRule"/>
</dbReference>
<dbReference type="GO" id="GO:0045892">
    <property type="term" value="P:negative regulation of DNA-templated transcription"/>
    <property type="evidence" value="ECO:0007669"/>
    <property type="project" value="UniProtKB-UniRule"/>
</dbReference>
<dbReference type="CDD" id="cd00490">
    <property type="entry name" value="Met_repressor_MetJ"/>
    <property type="match status" value="1"/>
</dbReference>
<dbReference type="FunFam" id="1.10.140.10:FF:000001">
    <property type="entry name" value="Met repressor"/>
    <property type="match status" value="1"/>
</dbReference>
<dbReference type="Gene3D" id="1.10.140.10">
    <property type="entry name" value="MET Apo-Repressor, subunit A"/>
    <property type="match status" value="1"/>
</dbReference>
<dbReference type="HAMAP" id="MF_00744">
    <property type="entry name" value="MetJ"/>
    <property type="match status" value="1"/>
</dbReference>
<dbReference type="InterPro" id="IPR002084">
    <property type="entry name" value="Met_repressor_MetJ"/>
</dbReference>
<dbReference type="InterPro" id="IPR023453">
    <property type="entry name" value="Met_repressor_MetJ_dom_sf"/>
</dbReference>
<dbReference type="InterPro" id="IPR010985">
    <property type="entry name" value="Ribbon_hlx_hlx"/>
</dbReference>
<dbReference type="NCBIfam" id="NF003622">
    <property type="entry name" value="PRK05264.1"/>
    <property type="match status" value="1"/>
</dbReference>
<dbReference type="Pfam" id="PF01340">
    <property type="entry name" value="MetJ"/>
    <property type="match status" value="1"/>
</dbReference>
<dbReference type="SUPFAM" id="SSF47598">
    <property type="entry name" value="Ribbon-helix-helix"/>
    <property type="match status" value="1"/>
</dbReference>
<gene>
    <name evidence="1" type="primary">metJ</name>
    <name type="ordered locus">VV1_1362</name>
</gene>
<evidence type="ECO:0000255" key="1">
    <source>
        <dbReference type="HAMAP-Rule" id="MF_00744"/>
    </source>
</evidence>
<keyword id="KW-0028">Amino-acid biosynthesis</keyword>
<keyword id="KW-0963">Cytoplasm</keyword>
<keyword id="KW-0238">DNA-binding</keyword>
<keyword id="KW-0486">Methionine biosynthesis</keyword>
<keyword id="KW-0678">Repressor</keyword>
<keyword id="KW-0804">Transcription</keyword>
<keyword id="KW-0805">Transcription regulation</keyword>
<feature type="chain" id="PRO_0000198410" description="Met repressor">
    <location>
        <begin position="1"/>
        <end position="105"/>
    </location>
</feature>
<sequence>MADWNGEYISPYAEHGKKSEQVKKITVSIPLKVLKVLTDERTRRQINNLRHATNSELLCEAFLHAYTGQPLPTDEDLRKDRPDDIPTEAKELMTAMGIEFEAYDD</sequence>
<reference key="1">
    <citation type="submission" date="2002-12" db="EMBL/GenBank/DDBJ databases">
        <title>Complete genome sequence of Vibrio vulnificus CMCP6.</title>
        <authorList>
            <person name="Rhee J.H."/>
            <person name="Kim S.Y."/>
            <person name="Chung S.S."/>
            <person name="Kim J.J."/>
            <person name="Moon Y.H."/>
            <person name="Jeong H."/>
            <person name="Choy H.E."/>
        </authorList>
    </citation>
    <scope>NUCLEOTIDE SEQUENCE [LARGE SCALE GENOMIC DNA]</scope>
    <source>
        <strain>CMCP6</strain>
    </source>
</reference>
<comment type="function">
    <text evidence="1">This regulatory protein, when combined with SAM (S-adenosylmethionine) represses the expression of the methionine regulon and of enzymes involved in SAM synthesis.</text>
</comment>
<comment type="subunit">
    <text evidence="1">Homodimer.</text>
</comment>
<comment type="subcellular location">
    <subcellularLocation>
        <location evidence="1">Cytoplasm</location>
    </subcellularLocation>
</comment>
<comment type="domain">
    <text>Does not bind DNA by a helix-turn-helix motif.</text>
</comment>
<comment type="similarity">
    <text evidence="1">Belongs to the MetJ family.</text>
</comment>